<proteinExistence type="inferred from homology"/>
<name>RS5_MALP2</name>
<protein>
    <recommendedName>
        <fullName evidence="1">Small ribosomal subunit protein uS5</fullName>
    </recommendedName>
    <alternativeName>
        <fullName evidence="3">30S ribosomal protein S5</fullName>
    </alternativeName>
</protein>
<keyword id="KW-1185">Reference proteome</keyword>
<keyword id="KW-0687">Ribonucleoprotein</keyword>
<keyword id="KW-0689">Ribosomal protein</keyword>
<keyword id="KW-0694">RNA-binding</keyword>
<keyword id="KW-0699">rRNA-binding</keyword>
<reference key="1">
    <citation type="journal article" date="2002" name="Nucleic Acids Res.">
        <title>The complete genomic sequence of Mycoplasma penetrans, an intracellular bacterial pathogen in humans.</title>
        <authorList>
            <person name="Sasaki Y."/>
            <person name="Ishikawa J."/>
            <person name="Yamashita A."/>
            <person name="Oshima K."/>
            <person name="Kenri T."/>
            <person name="Furuya K."/>
            <person name="Yoshino C."/>
            <person name="Horino A."/>
            <person name="Shiba T."/>
            <person name="Sasaki T."/>
            <person name="Hattori M."/>
        </authorList>
    </citation>
    <scope>NUCLEOTIDE SEQUENCE [LARGE SCALE GENOMIC DNA]</scope>
    <source>
        <strain>HF-2</strain>
    </source>
</reference>
<organism>
    <name type="scientific">Malacoplasma penetrans (strain HF-2)</name>
    <name type="common">Mycoplasma penetrans</name>
    <dbReference type="NCBI Taxonomy" id="272633"/>
    <lineage>
        <taxon>Bacteria</taxon>
        <taxon>Bacillati</taxon>
        <taxon>Mycoplasmatota</taxon>
        <taxon>Mycoplasmoidales</taxon>
        <taxon>Mycoplasmoidaceae</taxon>
        <taxon>Malacoplasma</taxon>
    </lineage>
</organism>
<accession>Q8EUD0</accession>
<sequence>MEDIKTTTPEVKNEENKTSEVKEGKALEKNNKPHFVKANSSNVKPFERRSNPNNKKPFSKDGSGNKPNKIVKQSVTGLEEKIVGVKKISKTTKGGRNMRFSALAVIGDRKGNVGFGLGKSIEVPVAIRKALKSAKNNMYKVKMNKNFTLYHEVIGKHGAGKVLIKPAPKGTGVIAGGPIKVVLELCGFKDVYSKNLGKNTSLNMVRATIKGLQMQKSPKEYATLRDKTLKDIWE</sequence>
<evidence type="ECO:0000255" key="1">
    <source>
        <dbReference type="HAMAP-Rule" id="MF_01307"/>
    </source>
</evidence>
<evidence type="ECO:0000256" key="2">
    <source>
        <dbReference type="SAM" id="MobiDB-lite"/>
    </source>
</evidence>
<evidence type="ECO:0000305" key="3"/>
<comment type="function">
    <text evidence="1">With S4 and S12 plays an important role in translational accuracy.</text>
</comment>
<comment type="function">
    <text evidence="1">Located at the back of the 30S subunit body where it stabilizes the conformation of the head with respect to the body.</text>
</comment>
<comment type="subunit">
    <text evidence="1">Part of the 30S ribosomal subunit. Contacts proteins S4 and S8.</text>
</comment>
<comment type="domain">
    <text>The N-terminal domain interacts with the head of the 30S subunit; the C-terminal domain interacts with the body and contacts protein S4. The interaction surface between S4 and S5 is involved in control of translational fidelity.</text>
</comment>
<comment type="similarity">
    <text evidence="1">Belongs to the universal ribosomal protein uS5 family.</text>
</comment>
<dbReference type="EMBL" id="BA000026">
    <property type="protein sequence ID" value="BAC44786.1"/>
    <property type="molecule type" value="Genomic_DNA"/>
</dbReference>
<dbReference type="RefSeq" id="WP_011077814.1">
    <property type="nucleotide sequence ID" value="NC_004432.1"/>
</dbReference>
<dbReference type="SMR" id="Q8EUD0"/>
<dbReference type="FunCoup" id="Q8EUD0">
    <property type="interactions" value="279"/>
</dbReference>
<dbReference type="STRING" id="272633.gene:10732120"/>
<dbReference type="KEGG" id="mpe:MYPE10000"/>
<dbReference type="eggNOG" id="COG0098">
    <property type="taxonomic scope" value="Bacteria"/>
</dbReference>
<dbReference type="HOGENOM" id="CLU_065898_2_1_14"/>
<dbReference type="InParanoid" id="Q8EUD0"/>
<dbReference type="Proteomes" id="UP000002522">
    <property type="component" value="Chromosome"/>
</dbReference>
<dbReference type="GO" id="GO:0015935">
    <property type="term" value="C:small ribosomal subunit"/>
    <property type="evidence" value="ECO:0007669"/>
    <property type="project" value="InterPro"/>
</dbReference>
<dbReference type="GO" id="GO:0019843">
    <property type="term" value="F:rRNA binding"/>
    <property type="evidence" value="ECO:0007669"/>
    <property type="project" value="UniProtKB-UniRule"/>
</dbReference>
<dbReference type="GO" id="GO:0003735">
    <property type="term" value="F:structural constituent of ribosome"/>
    <property type="evidence" value="ECO:0007669"/>
    <property type="project" value="InterPro"/>
</dbReference>
<dbReference type="GO" id="GO:0006412">
    <property type="term" value="P:translation"/>
    <property type="evidence" value="ECO:0007669"/>
    <property type="project" value="UniProtKB-UniRule"/>
</dbReference>
<dbReference type="FunFam" id="3.30.230.10:FF:000002">
    <property type="entry name" value="30S ribosomal protein S5"/>
    <property type="match status" value="1"/>
</dbReference>
<dbReference type="Gene3D" id="3.30.160.20">
    <property type="match status" value="1"/>
</dbReference>
<dbReference type="Gene3D" id="3.30.230.10">
    <property type="match status" value="1"/>
</dbReference>
<dbReference type="HAMAP" id="MF_01307_B">
    <property type="entry name" value="Ribosomal_uS5_B"/>
    <property type="match status" value="1"/>
</dbReference>
<dbReference type="InterPro" id="IPR020568">
    <property type="entry name" value="Ribosomal_Su5_D2-typ_SF"/>
</dbReference>
<dbReference type="InterPro" id="IPR000851">
    <property type="entry name" value="Ribosomal_uS5"/>
</dbReference>
<dbReference type="InterPro" id="IPR005712">
    <property type="entry name" value="Ribosomal_uS5_bac-type"/>
</dbReference>
<dbReference type="InterPro" id="IPR005324">
    <property type="entry name" value="Ribosomal_uS5_C"/>
</dbReference>
<dbReference type="InterPro" id="IPR013810">
    <property type="entry name" value="Ribosomal_uS5_N"/>
</dbReference>
<dbReference type="InterPro" id="IPR018192">
    <property type="entry name" value="Ribosomal_uS5_N_CS"/>
</dbReference>
<dbReference type="InterPro" id="IPR014721">
    <property type="entry name" value="Ribsml_uS5_D2-typ_fold_subgr"/>
</dbReference>
<dbReference type="NCBIfam" id="TIGR01021">
    <property type="entry name" value="rpsE_bact"/>
    <property type="match status" value="1"/>
</dbReference>
<dbReference type="PANTHER" id="PTHR48277">
    <property type="entry name" value="MITOCHONDRIAL RIBOSOMAL PROTEIN S5"/>
    <property type="match status" value="1"/>
</dbReference>
<dbReference type="PANTHER" id="PTHR48277:SF1">
    <property type="entry name" value="MITOCHONDRIAL RIBOSOMAL PROTEIN S5"/>
    <property type="match status" value="1"/>
</dbReference>
<dbReference type="Pfam" id="PF00333">
    <property type="entry name" value="Ribosomal_S5"/>
    <property type="match status" value="1"/>
</dbReference>
<dbReference type="Pfam" id="PF03719">
    <property type="entry name" value="Ribosomal_S5_C"/>
    <property type="match status" value="1"/>
</dbReference>
<dbReference type="SUPFAM" id="SSF54768">
    <property type="entry name" value="dsRNA-binding domain-like"/>
    <property type="match status" value="1"/>
</dbReference>
<dbReference type="SUPFAM" id="SSF54211">
    <property type="entry name" value="Ribosomal protein S5 domain 2-like"/>
    <property type="match status" value="1"/>
</dbReference>
<dbReference type="PROSITE" id="PS00585">
    <property type="entry name" value="RIBOSOMAL_S5"/>
    <property type="match status" value="1"/>
</dbReference>
<dbReference type="PROSITE" id="PS50881">
    <property type="entry name" value="S5_DSRBD"/>
    <property type="match status" value="1"/>
</dbReference>
<feature type="chain" id="PRO_0000131553" description="Small ribosomal subunit protein uS5">
    <location>
        <begin position="1"/>
        <end position="234"/>
    </location>
</feature>
<feature type="domain" description="S5 DRBM" evidence="1">
    <location>
        <begin position="78"/>
        <end position="141"/>
    </location>
</feature>
<feature type="region of interest" description="Disordered" evidence="2">
    <location>
        <begin position="1"/>
        <end position="69"/>
    </location>
</feature>
<feature type="compositionally biased region" description="Polar residues" evidence="2">
    <location>
        <begin position="1"/>
        <end position="10"/>
    </location>
</feature>
<feature type="compositionally biased region" description="Basic and acidic residues" evidence="2">
    <location>
        <begin position="11"/>
        <end position="31"/>
    </location>
</feature>
<gene>
    <name evidence="1" type="primary">rpsE</name>
    <name type="ordered locus">MYPE10000</name>
</gene>